<protein>
    <recommendedName>
        <fullName evidence="1">Putative uncharacterized protein YIL047C-A</fullName>
    </recommendedName>
</protein>
<sequence length="122" mass="14124">MNMLPMFTYSGLPVTLLCLIQLRRSVMILWIVVIWVQKPFHHLTTYLSRLHMTIILTVLPNLCPLTVGLSEEGPPCLRTFRDPFLGHMQLISKDQLSIPWMIGLPKQIVKVKWKVLCDLGWT</sequence>
<feature type="chain" id="PRO_0000431034" description="Putative uncharacterized protein YIL047C-A">
    <location>
        <begin position="1"/>
        <end position="122"/>
    </location>
</feature>
<dbReference type="EMBL" id="KJ412270">
    <property type="protein sequence ID" value="AHX39313.1"/>
    <property type="molecule type" value="Genomic_DNA"/>
</dbReference>
<dbReference type="PaxDb" id="4932-YIL047C-A"/>
<dbReference type="EnsemblFungi" id="YIL047C-A_mRNA">
    <property type="protein sequence ID" value="YIL047C-A"/>
    <property type="gene ID" value="YIL047C-A"/>
</dbReference>
<dbReference type="AGR" id="SGD:S000028790"/>
<dbReference type="SGD" id="S000028790">
    <property type="gene designation" value="YIL047C-A"/>
</dbReference>
<dbReference type="HOGENOM" id="CLU_2028073_0_0_1"/>
<name>YI047_YEAST</name>
<proteinExistence type="uncertain"/>
<reference key="1">
    <citation type="journal article" date="1997" name="Nature">
        <title>The nucleotide sequence of Saccharomyces cerevisiae chromosome IX.</title>
        <authorList>
            <person name="Churcher C.M."/>
            <person name="Bowman S."/>
            <person name="Badcock K."/>
            <person name="Bankier A.T."/>
            <person name="Brown D."/>
            <person name="Chillingworth T."/>
            <person name="Connor R."/>
            <person name="Devlin K."/>
            <person name="Gentles S."/>
            <person name="Hamlin N."/>
            <person name="Harris D.E."/>
            <person name="Horsnell T."/>
            <person name="Hunt S."/>
            <person name="Jagels K."/>
            <person name="Jones M."/>
            <person name="Lye G."/>
            <person name="Moule S."/>
            <person name="Odell C."/>
            <person name="Pearson D."/>
            <person name="Rajandream M.A."/>
            <person name="Rice P."/>
            <person name="Rowley N."/>
            <person name="Skelton J."/>
            <person name="Smith V."/>
            <person name="Walsh S.V."/>
            <person name="Whitehead S."/>
            <person name="Barrell B.G."/>
        </authorList>
    </citation>
    <scope>NUCLEOTIDE SEQUENCE [LARGE SCALE GENOMIC DNA]</scope>
    <source>
        <strain>ATCC 204508 / S288c</strain>
    </source>
</reference>
<reference key="2">
    <citation type="journal article" date="2014" name="G3 (Bethesda)">
        <title>The reference genome sequence of Saccharomyces cerevisiae: Then and now.</title>
        <authorList>
            <person name="Engel S.R."/>
            <person name="Dietrich F.S."/>
            <person name="Fisk D.G."/>
            <person name="Binkley G."/>
            <person name="Balakrishnan R."/>
            <person name="Costanzo M.C."/>
            <person name="Dwight S.S."/>
            <person name="Hitz B.C."/>
            <person name="Karra K."/>
            <person name="Nash R.S."/>
            <person name="Weng S."/>
            <person name="Wong E.D."/>
            <person name="Lloyd P."/>
            <person name="Skrzypek M.S."/>
            <person name="Miyasato S.R."/>
            <person name="Simison M."/>
            <person name="Cherry J.M."/>
        </authorList>
    </citation>
    <scope>GENOME REANNOTATION</scope>
    <source>
        <strain>ATCC 204508 / S288c</strain>
    </source>
</reference>
<accession>A0A023PYH8</accession>
<gene>
    <name evidence="3" type="ordered locus">YIL047C-A</name>
</gene>
<organism>
    <name type="scientific">Saccharomyces cerevisiae (strain ATCC 204508 / S288c)</name>
    <name type="common">Baker's yeast</name>
    <dbReference type="NCBI Taxonomy" id="559292"/>
    <lineage>
        <taxon>Eukaryota</taxon>
        <taxon>Fungi</taxon>
        <taxon>Dikarya</taxon>
        <taxon>Ascomycota</taxon>
        <taxon>Saccharomycotina</taxon>
        <taxon>Saccharomycetes</taxon>
        <taxon>Saccharomycetales</taxon>
        <taxon>Saccharomycetaceae</taxon>
        <taxon>Saccharomyces</taxon>
    </lineage>
</organism>
<comment type="miscellaneous">
    <text evidence="1">Partially overlaps SYG1.</text>
</comment>
<comment type="caution">
    <text evidence="2">Product of a dubious gene prediction unlikely to encode a functional protein. Because of that it is not part of the S.cerevisiae S288c complete/reference proteome set.</text>
</comment>
<evidence type="ECO:0000305" key="1"/>
<evidence type="ECO:0000305" key="2">
    <source>
    </source>
</evidence>
<evidence type="ECO:0000312" key="3">
    <source>
        <dbReference type="SGD" id="S000028790"/>
    </source>
</evidence>